<protein>
    <recommendedName>
        <fullName evidence="1">Urease subunit alpha</fullName>
        <ecNumber evidence="1">3.5.1.5</ecNumber>
    </recommendedName>
    <alternativeName>
        <fullName evidence="1">Urea amidohydrolase subunit alpha</fullName>
    </alternativeName>
</protein>
<comment type="catalytic activity">
    <reaction evidence="1">
        <text>urea + 2 H2O + H(+) = hydrogencarbonate + 2 NH4(+)</text>
        <dbReference type="Rhea" id="RHEA:20557"/>
        <dbReference type="ChEBI" id="CHEBI:15377"/>
        <dbReference type="ChEBI" id="CHEBI:15378"/>
        <dbReference type="ChEBI" id="CHEBI:16199"/>
        <dbReference type="ChEBI" id="CHEBI:17544"/>
        <dbReference type="ChEBI" id="CHEBI:28938"/>
        <dbReference type="EC" id="3.5.1.5"/>
    </reaction>
</comment>
<comment type="cofactor">
    <cofactor evidence="1">
        <name>Ni cation</name>
        <dbReference type="ChEBI" id="CHEBI:25516"/>
    </cofactor>
    <text evidence="1">Binds 2 nickel ions per subunit.</text>
</comment>
<comment type="pathway">
    <text evidence="1">Nitrogen metabolism; urea degradation; CO(2) and NH(3) from urea (urease route): step 1/1.</text>
</comment>
<comment type="subunit">
    <text evidence="1">Heterotrimer of UreA (gamma), UreB (beta) and UreC (alpha) subunits. Three heterotrimers associate to form the active enzyme.</text>
</comment>
<comment type="subcellular location">
    <subcellularLocation>
        <location evidence="1">Cytoplasm</location>
    </subcellularLocation>
</comment>
<comment type="PTM">
    <text evidence="1">Carboxylation allows a single lysine to coordinate two nickel ions.</text>
</comment>
<comment type="similarity">
    <text evidence="1">Belongs to the metallo-dependent hydrolases superfamily. Urease alpha subunit family.</text>
</comment>
<dbReference type="EC" id="3.5.1.5" evidence="1"/>
<dbReference type="EMBL" id="CP000958">
    <property type="protein sequence ID" value="ACA90048.1"/>
    <property type="molecule type" value="Genomic_DNA"/>
</dbReference>
<dbReference type="RefSeq" id="WP_006476701.1">
    <property type="nucleotide sequence ID" value="NC_010508.1"/>
</dbReference>
<dbReference type="SMR" id="B1JX29"/>
<dbReference type="MEROPS" id="M38.982"/>
<dbReference type="GeneID" id="83047661"/>
<dbReference type="KEGG" id="bcm:Bcenmc03_0870"/>
<dbReference type="HOGENOM" id="CLU_000980_0_0_4"/>
<dbReference type="UniPathway" id="UPA00258">
    <property type="reaction ID" value="UER00370"/>
</dbReference>
<dbReference type="Proteomes" id="UP000002169">
    <property type="component" value="Chromosome 1"/>
</dbReference>
<dbReference type="GO" id="GO:0005737">
    <property type="term" value="C:cytoplasm"/>
    <property type="evidence" value="ECO:0007669"/>
    <property type="project" value="UniProtKB-SubCell"/>
</dbReference>
<dbReference type="GO" id="GO:0016151">
    <property type="term" value="F:nickel cation binding"/>
    <property type="evidence" value="ECO:0007669"/>
    <property type="project" value="UniProtKB-UniRule"/>
</dbReference>
<dbReference type="GO" id="GO:0009039">
    <property type="term" value="F:urease activity"/>
    <property type="evidence" value="ECO:0007669"/>
    <property type="project" value="UniProtKB-UniRule"/>
</dbReference>
<dbReference type="GO" id="GO:0043419">
    <property type="term" value="P:urea catabolic process"/>
    <property type="evidence" value="ECO:0007669"/>
    <property type="project" value="UniProtKB-UniRule"/>
</dbReference>
<dbReference type="CDD" id="cd00375">
    <property type="entry name" value="Urease_alpha"/>
    <property type="match status" value="1"/>
</dbReference>
<dbReference type="Gene3D" id="3.20.20.140">
    <property type="entry name" value="Metal-dependent hydrolases"/>
    <property type="match status" value="1"/>
</dbReference>
<dbReference type="Gene3D" id="2.30.40.10">
    <property type="entry name" value="Urease, subunit C, domain 1"/>
    <property type="match status" value="1"/>
</dbReference>
<dbReference type="HAMAP" id="MF_01953">
    <property type="entry name" value="Urease_alpha"/>
    <property type="match status" value="1"/>
</dbReference>
<dbReference type="InterPro" id="IPR006680">
    <property type="entry name" value="Amidohydro-rel"/>
</dbReference>
<dbReference type="InterPro" id="IPR011059">
    <property type="entry name" value="Metal-dep_hydrolase_composite"/>
</dbReference>
<dbReference type="InterPro" id="IPR032466">
    <property type="entry name" value="Metal_Hydrolase"/>
</dbReference>
<dbReference type="InterPro" id="IPR011612">
    <property type="entry name" value="Urease_alpha_N_dom"/>
</dbReference>
<dbReference type="InterPro" id="IPR050112">
    <property type="entry name" value="Urease_alpha_subunit"/>
</dbReference>
<dbReference type="InterPro" id="IPR017950">
    <property type="entry name" value="Urease_AS"/>
</dbReference>
<dbReference type="InterPro" id="IPR005848">
    <property type="entry name" value="Urease_asu"/>
</dbReference>
<dbReference type="InterPro" id="IPR017951">
    <property type="entry name" value="Urease_asu_c"/>
</dbReference>
<dbReference type="InterPro" id="IPR029754">
    <property type="entry name" value="Urease_Ni-bd"/>
</dbReference>
<dbReference type="NCBIfam" id="NF009685">
    <property type="entry name" value="PRK13206.1"/>
    <property type="match status" value="1"/>
</dbReference>
<dbReference type="NCBIfam" id="NF009686">
    <property type="entry name" value="PRK13207.1"/>
    <property type="match status" value="1"/>
</dbReference>
<dbReference type="NCBIfam" id="TIGR01792">
    <property type="entry name" value="urease_alph"/>
    <property type="match status" value="1"/>
</dbReference>
<dbReference type="PANTHER" id="PTHR43440">
    <property type="entry name" value="UREASE"/>
    <property type="match status" value="1"/>
</dbReference>
<dbReference type="PANTHER" id="PTHR43440:SF1">
    <property type="entry name" value="UREASE"/>
    <property type="match status" value="1"/>
</dbReference>
<dbReference type="Pfam" id="PF01979">
    <property type="entry name" value="Amidohydro_1"/>
    <property type="match status" value="1"/>
</dbReference>
<dbReference type="Pfam" id="PF00449">
    <property type="entry name" value="Urease_alpha"/>
    <property type="match status" value="1"/>
</dbReference>
<dbReference type="PRINTS" id="PR01752">
    <property type="entry name" value="UREASE"/>
</dbReference>
<dbReference type="SUPFAM" id="SSF51338">
    <property type="entry name" value="Composite domain of metallo-dependent hydrolases"/>
    <property type="match status" value="2"/>
</dbReference>
<dbReference type="SUPFAM" id="SSF51556">
    <property type="entry name" value="Metallo-dependent hydrolases"/>
    <property type="match status" value="1"/>
</dbReference>
<dbReference type="PROSITE" id="PS01120">
    <property type="entry name" value="UREASE_1"/>
    <property type="match status" value="1"/>
</dbReference>
<dbReference type="PROSITE" id="PS00145">
    <property type="entry name" value="UREASE_2"/>
    <property type="match status" value="1"/>
</dbReference>
<dbReference type="PROSITE" id="PS51368">
    <property type="entry name" value="UREASE_3"/>
    <property type="match status" value="1"/>
</dbReference>
<feature type="chain" id="PRO_1000188865" description="Urease subunit alpha">
    <location>
        <begin position="1"/>
        <end position="568"/>
    </location>
</feature>
<feature type="domain" description="Urease" evidence="1">
    <location>
        <begin position="130"/>
        <end position="568"/>
    </location>
</feature>
<feature type="active site" description="Proton donor" evidence="1">
    <location>
        <position position="321"/>
    </location>
</feature>
<feature type="binding site" evidence="1">
    <location>
        <position position="135"/>
    </location>
    <ligand>
        <name>Ni(2+)</name>
        <dbReference type="ChEBI" id="CHEBI:49786"/>
        <label>1</label>
    </ligand>
</feature>
<feature type="binding site" evidence="1">
    <location>
        <position position="137"/>
    </location>
    <ligand>
        <name>Ni(2+)</name>
        <dbReference type="ChEBI" id="CHEBI:49786"/>
        <label>1</label>
    </ligand>
</feature>
<feature type="binding site" description="via carbamate group" evidence="1">
    <location>
        <position position="218"/>
    </location>
    <ligand>
        <name>Ni(2+)</name>
        <dbReference type="ChEBI" id="CHEBI:49786"/>
        <label>1</label>
    </ligand>
</feature>
<feature type="binding site" description="via carbamate group" evidence="1">
    <location>
        <position position="218"/>
    </location>
    <ligand>
        <name>Ni(2+)</name>
        <dbReference type="ChEBI" id="CHEBI:49786"/>
        <label>2</label>
    </ligand>
</feature>
<feature type="binding site" evidence="1">
    <location>
        <position position="220"/>
    </location>
    <ligand>
        <name>substrate</name>
    </ligand>
</feature>
<feature type="binding site" evidence="1">
    <location>
        <position position="247"/>
    </location>
    <ligand>
        <name>Ni(2+)</name>
        <dbReference type="ChEBI" id="CHEBI:49786"/>
        <label>2</label>
    </ligand>
</feature>
<feature type="binding site" evidence="1">
    <location>
        <position position="273"/>
    </location>
    <ligand>
        <name>Ni(2+)</name>
        <dbReference type="ChEBI" id="CHEBI:49786"/>
        <label>2</label>
    </ligand>
</feature>
<feature type="binding site" evidence="1">
    <location>
        <position position="361"/>
    </location>
    <ligand>
        <name>Ni(2+)</name>
        <dbReference type="ChEBI" id="CHEBI:49786"/>
        <label>1</label>
    </ligand>
</feature>
<feature type="modified residue" description="N6-carboxylysine" evidence="1">
    <location>
        <position position="218"/>
    </location>
</feature>
<evidence type="ECO:0000255" key="1">
    <source>
        <dbReference type="HAMAP-Rule" id="MF_01953"/>
    </source>
</evidence>
<reference key="1">
    <citation type="submission" date="2008-02" db="EMBL/GenBank/DDBJ databases">
        <title>Complete sequence of chromosome 1 of Burkholderia cenocepacia MC0-3.</title>
        <authorList>
            <person name="Copeland A."/>
            <person name="Lucas S."/>
            <person name="Lapidus A."/>
            <person name="Barry K."/>
            <person name="Bruce D."/>
            <person name="Goodwin L."/>
            <person name="Glavina del Rio T."/>
            <person name="Dalin E."/>
            <person name="Tice H."/>
            <person name="Pitluck S."/>
            <person name="Chain P."/>
            <person name="Malfatti S."/>
            <person name="Shin M."/>
            <person name="Vergez L."/>
            <person name="Schmutz J."/>
            <person name="Larimer F."/>
            <person name="Land M."/>
            <person name="Hauser L."/>
            <person name="Kyrpides N."/>
            <person name="Mikhailova N."/>
            <person name="Tiedje J."/>
            <person name="Richardson P."/>
        </authorList>
    </citation>
    <scope>NUCLEOTIDE SEQUENCE [LARGE SCALE GENOMIC DNA]</scope>
    <source>
        <strain>MC0-3</strain>
    </source>
</reference>
<organism>
    <name type="scientific">Burkholderia orbicola (strain MC0-3)</name>
    <dbReference type="NCBI Taxonomy" id="406425"/>
    <lineage>
        <taxon>Bacteria</taxon>
        <taxon>Pseudomonadati</taxon>
        <taxon>Pseudomonadota</taxon>
        <taxon>Betaproteobacteria</taxon>
        <taxon>Burkholderiales</taxon>
        <taxon>Burkholderiaceae</taxon>
        <taxon>Burkholderia</taxon>
        <taxon>Burkholderia cepacia complex</taxon>
        <taxon>Burkholderia orbicola</taxon>
    </lineage>
</organism>
<accession>B1JX29</accession>
<name>URE1_BURO0</name>
<proteinExistence type="inferred from homology"/>
<keyword id="KW-0963">Cytoplasm</keyword>
<keyword id="KW-0378">Hydrolase</keyword>
<keyword id="KW-0479">Metal-binding</keyword>
<keyword id="KW-0533">Nickel</keyword>
<sequence>MTLRLSRRAYAEMFGPTTGDRVRLADTELLIEIERDFTTYGEEVKFGGGKVIRDGMGQSQRVAADVPDTVITNAVILDHWGIVKADIAIKHGRIAAIGKAGNPDIQPGVTIAIGAATEVIAGEGLIVTAGGIDTHIHFISPQQIDEALASGVTTMLGGGTGPATGTNATTCTPGPWHMERMLQAADGWPINLGFLGKGNASLPQPLVEQIAAGAIGLKLHEDWGTTPAAIDNCLSVADDTDTQVAIHTDTLNEAGFVESTVAAFKGRTIHTYHTEGAGGGHAPDILKVCGEMNVLPSSTNPTRPYTINTLDEHLDMLMVCHHLDPSIAEDLAFAESRIRRETIAAEDILHDLGALSMLSSDSQAMGRVGEVIIRTWQTAHKMKVQRGALPEDTARNDNFRAKRYVAKYTINPALTHGIAHEVGSIEPGKWADLVLWEPAFFGIKPSMILKGGMIAVAQMGDPNASIPTPQPVHYREMFATRGGALARTSLTFVSQMAADAGIAERYGLAKRIVPVRNCRNVTKADMIHNAWRPSISVDPETYDVIADGQLLTCEPATVLPMAQRYFLF</sequence>
<gene>
    <name evidence="1" type="primary">ureC</name>
    <name type="ordered locus">Bcenmc03_0870</name>
</gene>